<organism>
    <name type="scientific">Yersinia pestis</name>
    <dbReference type="NCBI Taxonomy" id="632"/>
    <lineage>
        <taxon>Bacteria</taxon>
        <taxon>Pseudomonadati</taxon>
        <taxon>Pseudomonadota</taxon>
        <taxon>Gammaproteobacteria</taxon>
        <taxon>Enterobacterales</taxon>
        <taxon>Yersiniaceae</taxon>
        <taxon>Yersinia</taxon>
    </lineage>
</organism>
<accession>P61416</accession>
<accession>O68696</accession>
<geneLocation type="plasmid">
    <name>pCD1</name>
</geneLocation>
<feature type="chain" id="PRO_0000066500" description="Yop proteins translocation protein X">
    <location>
        <begin position="1"/>
        <end position="122"/>
    </location>
</feature>
<feature type="coiled-coil region" evidence="1">
    <location>
        <begin position="71"/>
        <end position="87"/>
    </location>
</feature>
<protein>
    <recommendedName>
        <fullName>Yop proteins translocation protein X</fullName>
    </recommendedName>
</protein>
<evidence type="ECO:0000255" key="1"/>
<proteinExistence type="evidence at protein level"/>
<comment type="function">
    <text>Required for Yop secretion.</text>
</comment>
<comment type="subunit">
    <text>Interacts with YscY.</text>
</comment>
<comment type="subcellular location">
    <subcellularLocation>
        <location>Secreted</location>
    </subcellularLocation>
    <text>Secreted via the type III secretion system.</text>
</comment>
<comment type="domain">
    <text>The region between residues 50 and 110, which contains the predicted coiled coil domain, is essential for interaction with YscY.</text>
</comment>
<comment type="miscellaneous">
    <text>May possess both an mRNA signal and a syc-dependent signal capable of directing its export through the type III secretion system.</text>
</comment>
<gene>
    <name type="primary">yscX</name>
    <name type="ordered locus">YPCD1.36c</name>
    <name type="ordered locus">y5042</name>
    <name type="ordered locus">y0045</name>
    <name type="ordered locus">YP_pCD47</name>
</gene>
<name>YSCX_YERPE</name>
<keyword id="KW-0175">Coiled coil</keyword>
<keyword id="KW-0614">Plasmid</keyword>
<keyword id="KW-1185">Reference proteome</keyword>
<keyword id="KW-0964">Secreted</keyword>
<reference key="1">
    <citation type="journal article" date="1998" name="Infect. Immun.">
        <title>DNA sequencing and analysis of the low-Ca2+-response plasmid pCD1 of Yersinia pestis KIM5.</title>
        <authorList>
            <person name="Perry R.D."/>
            <person name="Straley S.C."/>
            <person name="Fetherston J.D."/>
            <person name="Rose D.J."/>
            <person name="Gregor J."/>
            <person name="Blattner F.R."/>
        </authorList>
    </citation>
    <scope>NUCLEOTIDE SEQUENCE [GENOMIC DNA]</scope>
    <source>
        <strain>KIM5 / Biovar Mediaevalis</strain>
    </source>
</reference>
<reference key="2">
    <citation type="journal article" date="1998" name="J. Bacteriol.">
        <title>Structural organization of virulence-associated plasmids of Yersinia pestis.</title>
        <authorList>
            <person name="Hu P."/>
            <person name="Elliott J."/>
            <person name="McCready P."/>
            <person name="Skowronski E."/>
            <person name="Garnes J."/>
            <person name="Kobayashi A."/>
            <person name="Brubaker R.R."/>
            <person name="Garcia E."/>
        </authorList>
    </citation>
    <scope>NUCLEOTIDE SEQUENCE [GENOMIC DNA]</scope>
    <source>
        <strain>KIM5 / Biovar Mediaevalis</strain>
    </source>
</reference>
<reference key="3">
    <citation type="journal article" date="2001" name="Nature">
        <title>Genome sequence of Yersinia pestis, the causative agent of plague.</title>
        <authorList>
            <person name="Parkhill J."/>
            <person name="Wren B.W."/>
            <person name="Thomson N.R."/>
            <person name="Titball R.W."/>
            <person name="Holden M.T.G."/>
            <person name="Prentice M.B."/>
            <person name="Sebaihia M."/>
            <person name="James K.D."/>
            <person name="Churcher C.M."/>
            <person name="Mungall K.L."/>
            <person name="Baker S."/>
            <person name="Basham D."/>
            <person name="Bentley S.D."/>
            <person name="Brooks K."/>
            <person name="Cerdeno-Tarraga A.-M."/>
            <person name="Chillingworth T."/>
            <person name="Cronin A."/>
            <person name="Davies R.M."/>
            <person name="Davis P."/>
            <person name="Dougan G."/>
            <person name="Feltwell T."/>
            <person name="Hamlin N."/>
            <person name="Holroyd S."/>
            <person name="Jagels K."/>
            <person name="Karlyshev A.V."/>
            <person name="Leather S."/>
            <person name="Moule S."/>
            <person name="Oyston P.C.F."/>
            <person name="Quail M.A."/>
            <person name="Rutherford K.M."/>
            <person name="Simmonds M."/>
            <person name="Skelton J."/>
            <person name="Stevens K."/>
            <person name="Whitehead S."/>
            <person name="Barrell B.G."/>
        </authorList>
    </citation>
    <scope>NUCLEOTIDE SEQUENCE [LARGE SCALE GENOMIC DNA]</scope>
    <source>
        <strain>CO-92 / Biovar Orientalis</strain>
    </source>
</reference>
<reference key="4">
    <citation type="journal article" date="2004" name="DNA Res.">
        <title>Complete genome sequence of Yersinia pestis strain 91001, an isolate avirulent to humans.</title>
        <authorList>
            <person name="Song Y."/>
            <person name="Tong Z."/>
            <person name="Wang J."/>
            <person name="Wang L."/>
            <person name="Guo Z."/>
            <person name="Han Y."/>
            <person name="Zhang J."/>
            <person name="Pei D."/>
            <person name="Zhou D."/>
            <person name="Qin H."/>
            <person name="Pang X."/>
            <person name="Han Y."/>
            <person name="Zhai J."/>
            <person name="Li M."/>
            <person name="Cui B."/>
            <person name="Qi Z."/>
            <person name="Jin L."/>
            <person name="Dai R."/>
            <person name="Chen F."/>
            <person name="Li S."/>
            <person name="Ye C."/>
            <person name="Du Z."/>
            <person name="Lin W."/>
            <person name="Wang J."/>
            <person name="Yu J."/>
            <person name="Yang H."/>
            <person name="Wang J."/>
            <person name="Huang P."/>
            <person name="Yang R."/>
        </authorList>
    </citation>
    <scope>NUCLEOTIDE SEQUENCE [LARGE SCALE GENOMIC DNA]</scope>
    <source>
        <strain>91001 / Biovar Mediaevalis</strain>
    </source>
</reference>
<reference key="5">
    <citation type="journal article" date="2000" name="J. Bacteriol.">
        <title>The Yersinia pestis YscY protein directly binds YscX, a secreted component of the type III secretion machinery.</title>
        <authorList>
            <person name="Day J.B."/>
            <person name="Plano G.V."/>
        </authorList>
    </citation>
    <scope>CHARACTERIZATION</scope>
    <source>
        <strain>KIM8</strain>
    </source>
</reference>
<sequence length="122" mass="13756">MSRIITAPHIGIEKLSAISLEELSCGLPERYALPPDGHPVEPHLERLYPTAQSKRSLWDFASPGYTFHGLHRAQDYRRELDTLQSLLTTSQSSELQAAAALLKCQQDDDRLLQIILNLLHKV</sequence>
<dbReference type="EMBL" id="AF074612">
    <property type="protein sequence ID" value="AAC69795.1"/>
    <property type="molecule type" value="Genomic_DNA"/>
</dbReference>
<dbReference type="EMBL" id="AF053946">
    <property type="protein sequence ID" value="AAC62569.1"/>
    <property type="molecule type" value="Genomic_DNA"/>
</dbReference>
<dbReference type="EMBL" id="AL117189">
    <property type="protein sequence ID" value="CAB54913.1"/>
    <property type="molecule type" value="Genomic_DNA"/>
</dbReference>
<dbReference type="EMBL" id="AE017043">
    <property type="protein sequence ID" value="AAS58566.1"/>
    <property type="molecule type" value="Genomic_DNA"/>
</dbReference>
<dbReference type="PIR" id="T43589">
    <property type="entry name" value="T43589"/>
</dbReference>
<dbReference type="RefSeq" id="NP_395170.1">
    <property type="nucleotide sequence ID" value="NC_003131.1"/>
</dbReference>
<dbReference type="RefSeq" id="NP_857746.1">
    <property type="nucleotide sequence ID" value="NC_004836.1"/>
</dbReference>
<dbReference type="RefSeq" id="NP_857941.1">
    <property type="nucleotide sequence ID" value="NC_004839.1"/>
</dbReference>
<dbReference type="RefSeq" id="WP_002212969.1">
    <property type="nucleotide sequence ID" value="NZ_WUCM01000070.1"/>
</dbReference>
<dbReference type="SMR" id="P61416"/>
<dbReference type="IntAct" id="P61416">
    <property type="interactions" value="12"/>
</dbReference>
<dbReference type="MINT" id="P61416"/>
<dbReference type="PaxDb" id="214092-5832456"/>
<dbReference type="EnsemblBacteria" id="AAS58566">
    <property type="protein sequence ID" value="AAS58566"/>
    <property type="gene ID" value="YP_pCD47"/>
</dbReference>
<dbReference type="KEGG" id="ype:YPCD1.36c"/>
<dbReference type="KEGG" id="ypm:YP_pCD47"/>
<dbReference type="PATRIC" id="fig|214092.21.peg.47"/>
<dbReference type="eggNOG" id="ENOG5032YR9">
    <property type="taxonomic scope" value="Bacteria"/>
</dbReference>
<dbReference type="HOGENOM" id="CLU_2033138_0_0_6"/>
<dbReference type="OMA" id="KYRQQFD"/>
<dbReference type="OrthoDB" id="6916027at2"/>
<dbReference type="Proteomes" id="UP000000815">
    <property type="component" value="Plasmid pCD1"/>
</dbReference>
<dbReference type="Proteomes" id="UP000001019">
    <property type="component" value="Plasmid pCD1"/>
</dbReference>
<dbReference type="GO" id="GO:0005576">
    <property type="term" value="C:extracellular region"/>
    <property type="evidence" value="ECO:0007669"/>
    <property type="project" value="UniProtKB-SubCell"/>
</dbReference>
<dbReference type="InterPro" id="IPR012672">
    <property type="entry name" value="T3SS_YscX"/>
</dbReference>
<dbReference type="NCBIfam" id="TIGR02502">
    <property type="entry name" value="type_III_YscX"/>
    <property type="match status" value="1"/>
</dbReference>
<dbReference type="Pfam" id="PF09474">
    <property type="entry name" value="Type_III_YscX"/>
    <property type="match status" value="1"/>
</dbReference>